<accession>A9MQT5</accession>
<reference key="1">
    <citation type="submission" date="2007-11" db="EMBL/GenBank/DDBJ databases">
        <authorList>
            <consortium name="The Salmonella enterica serovar Arizonae Genome Sequencing Project"/>
            <person name="McClelland M."/>
            <person name="Sanderson E.K."/>
            <person name="Porwollik S."/>
            <person name="Spieth J."/>
            <person name="Clifton W.S."/>
            <person name="Fulton R."/>
            <person name="Chunyan W."/>
            <person name="Wollam A."/>
            <person name="Shah N."/>
            <person name="Pepin K."/>
            <person name="Bhonagiri V."/>
            <person name="Nash W."/>
            <person name="Johnson M."/>
            <person name="Thiruvilangam P."/>
            <person name="Wilson R."/>
        </authorList>
    </citation>
    <scope>NUCLEOTIDE SEQUENCE [LARGE SCALE GENOMIC DNA]</scope>
    <source>
        <strain>ATCC BAA-731 / CDC346-86 / RSK2980</strain>
    </source>
</reference>
<keyword id="KW-0004">4Fe-4S</keyword>
<keyword id="KW-0067">ATP-binding</keyword>
<keyword id="KW-0963">Cytoplasm</keyword>
<keyword id="KW-0408">Iron</keyword>
<keyword id="KW-0411">Iron-sulfur</keyword>
<keyword id="KW-0460">Magnesium</keyword>
<keyword id="KW-0479">Metal-binding</keyword>
<keyword id="KW-0547">Nucleotide-binding</keyword>
<keyword id="KW-1185">Reference proteome</keyword>
<keyword id="KW-0694">RNA-binding</keyword>
<keyword id="KW-0808">Transferase</keyword>
<keyword id="KW-0819">tRNA processing</keyword>
<keyword id="KW-0820">tRNA-binding</keyword>
<organism>
    <name type="scientific">Salmonella arizonae (strain ATCC BAA-731 / CDC346-86 / RSK2980)</name>
    <dbReference type="NCBI Taxonomy" id="41514"/>
    <lineage>
        <taxon>Bacteria</taxon>
        <taxon>Pseudomonadati</taxon>
        <taxon>Pseudomonadota</taxon>
        <taxon>Gammaproteobacteria</taxon>
        <taxon>Enterobacterales</taxon>
        <taxon>Enterobacteriaceae</taxon>
        <taxon>Salmonella</taxon>
    </lineage>
</organism>
<sequence length="311" mass="35384">MQDNQKVKKKEQYNLNKLQKRLRRNVGEAIADFNMIEEGDRIMVCLSGGKDSYTMLEILRNLQQSAPINFSLVAVNLDQKQPGFPEHILPAYLEQLGVEYKIVEENTYGIVKEKIPEGKTTCSLCSRLRRGILYRTATELGATKIALGHHRDDILQTLFLNMFYGGKMKGMPPKLMSDDGKHIVIRPLAYCREKDIVRFAEAKAFPIIPCNLCGSQPNLQRQVIADMLRDWDKRYPGRIETMFSAMQDIVPSHLCDTNLFDFKGIAHGSEVVDGGDLAFDREEIPLQPAGWQPEEDDTPLETLRLDVIEVK</sequence>
<gene>
    <name evidence="1" type="primary">ttcA</name>
    <name type="ordered locus">SARI_01329</name>
</gene>
<feature type="chain" id="PRO_0000348824" description="tRNA-cytidine(32) 2-sulfurtransferase">
    <location>
        <begin position="1"/>
        <end position="311"/>
    </location>
</feature>
<feature type="short sequence motif" description="PP-loop motif" evidence="1">
    <location>
        <begin position="47"/>
        <end position="52"/>
    </location>
</feature>
<feature type="binding site" evidence="1">
    <location>
        <position position="122"/>
    </location>
    <ligand>
        <name>[4Fe-4S] cluster</name>
        <dbReference type="ChEBI" id="CHEBI:49883"/>
    </ligand>
</feature>
<feature type="binding site" evidence="1">
    <location>
        <position position="125"/>
    </location>
    <ligand>
        <name>[4Fe-4S] cluster</name>
        <dbReference type="ChEBI" id="CHEBI:49883"/>
    </ligand>
</feature>
<feature type="binding site" evidence="1">
    <location>
        <position position="213"/>
    </location>
    <ligand>
        <name>[4Fe-4S] cluster</name>
        <dbReference type="ChEBI" id="CHEBI:49883"/>
    </ligand>
</feature>
<protein>
    <recommendedName>
        <fullName evidence="1">tRNA-cytidine(32) 2-sulfurtransferase</fullName>
        <ecNumber evidence="1">2.8.1.-</ecNumber>
    </recommendedName>
    <alternativeName>
        <fullName evidence="1">Two-thiocytidine biosynthesis protein A</fullName>
    </alternativeName>
    <alternativeName>
        <fullName evidence="1">tRNA 2-thiocytidine biosynthesis protein TtcA</fullName>
    </alternativeName>
</protein>
<dbReference type="EC" id="2.8.1.-" evidence="1"/>
<dbReference type="EMBL" id="CP000880">
    <property type="protein sequence ID" value="ABX21230.1"/>
    <property type="molecule type" value="Genomic_DNA"/>
</dbReference>
<dbReference type="SMR" id="A9MQT5"/>
<dbReference type="STRING" id="41514.SARI_01329"/>
<dbReference type="KEGG" id="ses:SARI_01329"/>
<dbReference type="HOGENOM" id="CLU_026481_0_0_6"/>
<dbReference type="Proteomes" id="UP000002084">
    <property type="component" value="Chromosome"/>
</dbReference>
<dbReference type="GO" id="GO:0005737">
    <property type="term" value="C:cytoplasm"/>
    <property type="evidence" value="ECO:0007669"/>
    <property type="project" value="UniProtKB-SubCell"/>
</dbReference>
<dbReference type="GO" id="GO:0051539">
    <property type="term" value="F:4 iron, 4 sulfur cluster binding"/>
    <property type="evidence" value="ECO:0007669"/>
    <property type="project" value="UniProtKB-UniRule"/>
</dbReference>
<dbReference type="GO" id="GO:0005524">
    <property type="term" value="F:ATP binding"/>
    <property type="evidence" value="ECO:0007669"/>
    <property type="project" value="UniProtKB-UniRule"/>
</dbReference>
<dbReference type="GO" id="GO:0000287">
    <property type="term" value="F:magnesium ion binding"/>
    <property type="evidence" value="ECO:0007669"/>
    <property type="project" value="UniProtKB-UniRule"/>
</dbReference>
<dbReference type="GO" id="GO:0016783">
    <property type="term" value="F:sulfurtransferase activity"/>
    <property type="evidence" value="ECO:0007669"/>
    <property type="project" value="UniProtKB-UniRule"/>
</dbReference>
<dbReference type="GO" id="GO:0000049">
    <property type="term" value="F:tRNA binding"/>
    <property type="evidence" value="ECO:0007669"/>
    <property type="project" value="UniProtKB-KW"/>
</dbReference>
<dbReference type="GO" id="GO:0034227">
    <property type="term" value="P:tRNA thio-modification"/>
    <property type="evidence" value="ECO:0007669"/>
    <property type="project" value="UniProtKB-UniRule"/>
</dbReference>
<dbReference type="CDD" id="cd24138">
    <property type="entry name" value="TtcA-like"/>
    <property type="match status" value="1"/>
</dbReference>
<dbReference type="FunFam" id="3.40.50.620:FF:000046">
    <property type="entry name" value="tRNA-cytidine(32) 2-sulfurtransferase"/>
    <property type="match status" value="1"/>
</dbReference>
<dbReference type="Gene3D" id="3.40.50.620">
    <property type="entry name" value="HUPs"/>
    <property type="match status" value="1"/>
</dbReference>
<dbReference type="HAMAP" id="MF_01850">
    <property type="entry name" value="TtcA"/>
    <property type="match status" value="1"/>
</dbReference>
<dbReference type="InterPro" id="IPR014729">
    <property type="entry name" value="Rossmann-like_a/b/a_fold"/>
</dbReference>
<dbReference type="InterPro" id="IPR011063">
    <property type="entry name" value="TilS/TtcA_N"/>
</dbReference>
<dbReference type="InterPro" id="IPR012089">
    <property type="entry name" value="tRNA_Cyd_32_2_STrfase"/>
</dbReference>
<dbReference type="InterPro" id="IPR035107">
    <property type="entry name" value="tRNA_thiolation_TtcA_Ctu1"/>
</dbReference>
<dbReference type="NCBIfam" id="NF007972">
    <property type="entry name" value="PRK10696.1"/>
    <property type="match status" value="1"/>
</dbReference>
<dbReference type="PANTHER" id="PTHR43686:SF1">
    <property type="entry name" value="AMINOTRAN_5 DOMAIN-CONTAINING PROTEIN"/>
    <property type="match status" value="1"/>
</dbReference>
<dbReference type="PANTHER" id="PTHR43686">
    <property type="entry name" value="SULFURTRANSFERASE-RELATED"/>
    <property type="match status" value="1"/>
</dbReference>
<dbReference type="Pfam" id="PF01171">
    <property type="entry name" value="ATP_bind_3"/>
    <property type="match status" value="1"/>
</dbReference>
<dbReference type="PIRSF" id="PIRSF004976">
    <property type="entry name" value="ATPase_YdaO"/>
    <property type="match status" value="1"/>
</dbReference>
<dbReference type="SUPFAM" id="SSF52402">
    <property type="entry name" value="Adenine nucleotide alpha hydrolases-like"/>
    <property type="match status" value="1"/>
</dbReference>
<proteinExistence type="inferred from homology"/>
<name>TTCA_SALAR</name>
<evidence type="ECO:0000255" key="1">
    <source>
        <dbReference type="HAMAP-Rule" id="MF_01850"/>
    </source>
</evidence>
<comment type="function">
    <text evidence="1">Catalyzes the ATP-dependent 2-thiolation of cytidine in position 32 of tRNA, to form 2-thiocytidine (s(2)C32). The sulfur atoms are provided by the cysteine/cysteine desulfurase (IscS) system.</text>
</comment>
<comment type="catalytic activity">
    <reaction evidence="1">
        <text>cytidine(32) in tRNA + S-sulfanyl-L-cysteinyl-[cysteine desulfurase] + AH2 + ATP = 2-thiocytidine(32) in tRNA + L-cysteinyl-[cysteine desulfurase] + A + AMP + diphosphate + H(+)</text>
        <dbReference type="Rhea" id="RHEA:57048"/>
        <dbReference type="Rhea" id="RHEA-COMP:10288"/>
        <dbReference type="Rhea" id="RHEA-COMP:12157"/>
        <dbReference type="Rhea" id="RHEA-COMP:12158"/>
        <dbReference type="Rhea" id="RHEA-COMP:14821"/>
        <dbReference type="ChEBI" id="CHEBI:13193"/>
        <dbReference type="ChEBI" id="CHEBI:15378"/>
        <dbReference type="ChEBI" id="CHEBI:17499"/>
        <dbReference type="ChEBI" id="CHEBI:29950"/>
        <dbReference type="ChEBI" id="CHEBI:30616"/>
        <dbReference type="ChEBI" id="CHEBI:33019"/>
        <dbReference type="ChEBI" id="CHEBI:61963"/>
        <dbReference type="ChEBI" id="CHEBI:82748"/>
        <dbReference type="ChEBI" id="CHEBI:141453"/>
        <dbReference type="ChEBI" id="CHEBI:456215"/>
    </reaction>
    <physiologicalReaction direction="left-to-right" evidence="1">
        <dbReference type="Rhea" id="RHEA:57049"/>
    </physiologicalReaction>
</comment>
<comment type="cofactor">
    <cofactor evidence="1">
        <name>Mg(2+)</name>
        <dbReference type="ChEBI" id="CHEBI:18420"/>
    </cofactor>
</comment>
<comment type="cofactor">
    <cofactor evidence="1">
        <name>[4Fe-4S] cluster</name>
        <dbReference type="ChEBI" id="CHEBI:49883"/>
    </cofactor>
    <text evidence="1">Binds 1 [4Fe-4S] cluster per subunit. The cluster is chelated by three Cys residues, the fourth Fe has a free coordination site that may bind a sulfur atom transferred from the persulfide of IscS.</text>
</comment>
<comment type="pathway">
    <text evidence="1">tRNA modification.</text>
</comment>
<comment type="subunit">
    <text evidence="1">Homodimer.</text>
</comment>
<comment type="subcellular location">
    <subcellularLocation>
        <location evidence="1">Cytoplasm</location>
    </subcellularLocation>
</comment>
<comment type="miscellaneous">
    <text evidence="1">The thiolation reaction likely consists of two steps: a first activation step by ATP to form an adenylated intermediate of the target base of tRNA, and a second nucleophilic substitution step of the sulfur (S) atom supplied by the hydrosulfide attached to the Fe-S cluster.</text>
</comment>
<comment type="similarity">
    <text evidence="1">Belongs to the TtcA family.</text>
</comment>